<gene>
    <name evidence="1" type="primary">rplB</name>
    <name type="ordered locus">PG_1935</name>
</gene>
<comment type="function">
    <text evidence="1">One of the primary rRNA binding proteins. Required for association of the 30S and 50S subunits to form the 70S ribosome, for tRNA binding and peptide bond formation. It has been suggested to have peptidyltransferase activity; this is somewhat controversial. Makes several contacts with the 16S rRNA in the 70S ribosome.</text>
</comment>
<comment type="subunit">
    <text evidence="1">Part of the 50S ribosomal subunit. Forms a bridge to the 30S subunit in the 70S ribosome.</text>
</comment>
<comment type="similarity">
    <text evidence="1">Belongs to the universal ribosomal protein uL2 family.</text>
</comment>
<keyword id="KW-1185">Reference proteome</keyword>
<keyword id="KW-0687">Ribonucleoprotein</keyword>
<keyword id="KW-0689">Ribosomal protein</keyword>
<keyword id="KW-0694">RNA-binding</keyword>
<keyword id="KW-0699">rRNA-binding</keyword>
<proteinExistence type="inferred from homology"/>
<sequence length="274" mass="29717">MGIRKLKPTTPGQRHKVIGAFDKITASTPEKSLVVGKKKTGGRNNTGKMTMRYIGGGHKQKYRFIDFKRTKDGIPATVKTIEYDPNRSSRIALLYYADGAKAYIIAPDGLEVGHTVMSGSEAAPEVGNALPLANIPVGTIIHNIELRPGQGAKMVRSAGSFAQLTSREGTYVVIKMPSGEVRRILSTCKATIGSVGNSDHALEKSGKAGRSRWLGRRPHNRGVVMNPVDHPMGGGEGRQSGGHPRSRKGLYAKGLKTRAPKKHSSKYIIERRKK</sequence>
<evidence type="ECO:0000255" key="1">
    <source>
        <dbReference type="HAMAP-Rule" id="MF_01320"/>
    </source>
</evidence>
<evidence type="ECO:0000256" key="2">
    <source>
        <dbReference type="SAM" id="MobiDB-lite"/>
    </source>
</evidence>
<evidence type="ECO:0000305" key="3"/>
<feature type="chain" id="PRO_0000129595" description="Large ribosomal subunit protein uL2">
    <location>
        <begin position="1"/>
        <end position="274"/>
    </location>
</feature>
<feature type="region of interest" description="Disordered" evidence="2">
    <location>
        <begin position="197"/>
        <end position="274"/>
    </location>
</feature>
<feature type="compositionally biased region" description="Basic residues" evidence="2">
    <location>
        <begin position="207"/>
        <end position="220"/>
    </location>
</feature>
<feature type="compositionally biased region" description="Basic residues" evidence="2">
    <location>
        <begin position="244"/>
        <end position="274"/>
    </location>
</feature>
<protein>
    <recommendedName>
        <fullName evidence="1">Large ribosomal subunit protein uL2</fullName>
    </recommendedName>
    <alternativeName>
        <fullName evidence="3">50S ribosomal protein L2</fullName>
    </alternativeName>
</protein>
<name>RL2_PORGI</name>
<accession>Q7MTL6</accession>
<reference key="1">
    <citation type="journal article" date="2003" name="J. Bacteriol.">
        <title>Complete genome sequence of the oral pathogenic bacterium Porphyromonas gingivalis strain W83.</title>
        <authorList>
            <person name="Nelson K.E."/>
            <person name="Fleischmann R.D."/>
            <person name="DeBoy R.T."/>
            <person name="Paulsen I.T."/>
            <person name="Fouts D.E."/>
            <person name="Eisen J.A."/>
            <person name="Daugherty S.C."/>
            <person name="Dodson R.J."/>
            <person name="Durkin A.S."/>
            <person name="Gwinn M.L."/>
            <person name="Haft D.H."/>
            <person name="Kolonay J.F."/>
            <person name="Nelson W.C."/>
            <person name="Mason T.M."/>
            <person name="Tallon L."/>
            <person name="Gray J."/>
            <person name="Granger D."/>
            <person name="Tettelin H."/>
            <person name="Dong H."/>
            <person name="Galvin J.L."/>
            <person name="Duncan M.J."/>
            <person name="Dewhirst F.E."/>
            <person name="Fraser C.M."/>
        </authorList>
    </citation>
    <scope>NUCLEOTIDE SEQUENCE [LARGE SCALE GENOMIC DNA]</scope>
    <source>
        <strain>ATCC BAA-308 / W83</strain>
    </source>
</reference>
<organism>
    <name type="scientific">Porphyromonas gingivalis (strain ATCC BAA-308 / W83)</name>
    <dbReference type="NCBI Taxonomy" id="242619"/>
    <lineage>
        <taxon>Bacteria</taxon>
        <taxon>Pseudomonadati</taxon>
        <taxon>Bacteroidota</taxon>
        <taxon>Bacteroidia</taxon>
        <taxon>Bacteroidales</taxon>
        <taxon>Porphyromonadaceae</taxon>
        <taxon>Porphyromonas</taxon>
    </lineage>
</organism>
<dbReference type="EMBL" id="AE015924">
    <property type="protein sequence ID" value="AAQ66916.1"/>
    <property type="molecule type" value="Genomic_DNA"/>
</dbReference>
<dbReference type="RefSeq" id="WP_010956448.1">
    <property type="nucleotide sequence ID" value="NC_002950.2"/>
</dbReference>
<dbReference type="SMR" id="Q7MTL6"/>
<dbReference type="STRING" id="242619.PG_1935"/>
<dbReference type="EnsemblBacteria" id="AAQ66916">
    <property type="protein sequence ID" value="AAQ66916"/>
    <property type="gene ID" value="PG_1935"/>
</dbReference>
<dbReference type="GeneID" id="29257016"/>
<dbReference type="GeneID" id="57239593"/>
<dbReference type="KEGG" id="pgi:PG_1935"/>
<dbReference type="eggNOG" id="COG0090">
    <property type="taxonomic scope" value="Bacteria"/>
</dbReference>
<dbReference type="HOGENOM" id="CLU_036235_2_1_10"/>
<dbReference type="Proteomes" id="UP000000588">
    <property type="component" value="Chromosome"/>
</dbReference>
<dbReference type="GO" id="GO:0015934">
    <property type="term" value="C:large ribosomal subunit"/>
    <property type="evidence" value="ECO:0007669"/>
    <property type="project" value="InterPro"/>
</dbReference>
<dbReference type="GO" id="GO:0019843">
    <property type="term" value="F:rRNA binding"/>
    <property type="evidence" value="ECO:0007669"/>
    <property type="project" value="UniProtKB-UniRule"/>
</dbReference>
<dbReference type="GO" id="GO:0003735">
    <property type="term" value="F:structural constituent of ribosome"/>
    <property type="evidence" value="ECO:0007669"/>
    <property type="project" value="InterPro"/>
</dbReference>
<dbReference type="GO" id="GO:0016740">
    <property type="term" value="F:transferase activity"/>
    <property type="evidence" value="ECO:0007669"/>
    <property type="project" value="InterPro"/>
</dbReference>
<dbReference type="GO" id="GO:0002181">
    <property type="term" value="P:cytoplasmic translation"/>
    <property type="evidence" value="ECO:0007669"/>
    <property type="project" value="TreeGrafter"/>
</dbReference>
<dbReference type="FunFam" id="2.30.30.30:FF:000001">
    <property type="entry name" value="50S ribosomal protein L2"/>
    <property type="match status" value="1"/>
</dbReference>
<dbReference type="FunFam" id="2.40.50.140:FF:000003">
    <property type="entry name" value="50S ribosomal protein L2"/>
    <property type="match status" value="1"/>
</dbReference>
<dbReference type="FunFam" id="4.10.950.10:FF:000001">
    <property type="entry name" value="50S ribosomal protein L2"/>
    <property type="match status" value="1"/>
</dbReference>
<dbReference type="Gene3D" id="2.30.30.30">
    <property type="match status" value="1"/>
</dbReference>
<dbReference type="Gene3D" id="2.40.50.140">
    <property type="entry name" value="Nucleic acid-binding proteins"/>
    <property type="match status" value="1"/>
</dbReference>
<dbReference type="Gene3D" id="4.10.950.10">
    <property type="entry name" value="Ribosomal protein L2, domain 3"/>
    <property type="match status" value="1"/>
</dbReference>
<dbReference type="HAMAP" id="MF_01320_B">
    <property type="entry name" value="Ribosomal_uL2_B"/>
    <property type="match status" value="1"/>
</dbReference>
<dbReference type="InterPro" id="IPR012340">
    <property type="entry name" value="NA-bd_OB-fold"/>
</dbReference>
<dbReference type="InterPro" id="IPR014722">
    <property type="entry name" value="Rib_uL2_dom2"/>
</dbReference>
<dbReference type="InterPro" id="IPR002171">
    <property type="entry name" value="Ribosomal_uL2"/>
</dbReference>
<dbReference type="InterPro" id="IPR005880">
    <property type="entry name" value="Ribosomal_uL2_bac/org-type"/>
</dbReference>
<dbReference type="InterPro" id="IPR022669">
    <property type="entry name" value="Ribosomal_uL2_C"/>
</dbReference>
<dbReference type="InterPro" id="IPR022671">
    <property type="entry name" value="Ribosomal_uL2_CS"/>
</dbReference>
<dbReference type="InterPro" id="IPR014726">
    <property type="entry name" value="Ribosomal_uL2_dom3"/>
</dbReference>
<dbReference type="InterPro" id="IPR022666">
    <property type="entry name" value="Ribosomal_uL2_RNA-bd_dom"/>
</dbReference>
<dbReference type="InterPro" id="IPR008991">
    <property type="entry name" value="Translation_prot_SH3-like_sf"/>
</dbReference>
<dbReference type="NCBIfam" id="TIGR01171">
    <property type="entry name" value="rplB_bact"/>
    <property type="match status" value="1"/>
</dbReference>
<dbReference type="PANTHER" id="PTHR13691:SF5">
    <property type="entry name" value="LARGE RIBOSOMAL SUBUNIT PROTEIN UL2M"/>
    <property type="match status" value="1"/>
</dbReference>
<dbReference type="PANTHER" id="PTHR13691">
    <property type="entry name" value="RIBOSOMAL PROTEIN L2"/>
    <property type="match status" value="1"/>
</dbReference>
<dbReference type="Pfam" id="PF00181">
    <property type="entry name" value="Ribosomal_L2"/>
    <property type="match status" value="1"/>
</dbReference>
<dbReference type="Pfam" id="PF03947">
    <property type="entry name" value="Ribosomal_L2_C"/>
    <property type="match status" value="1"/>
</dbReference>
<dbReference type="PIRSF" id="PIRSF002158">
    <property type="entry name" value="Ribosomal_L2"/>
    <property type="match status" value="1"/>
</dbReference>
<dbReference type="SMART" id="SM01383">
    <property type="entry name" value="Ribosomal_L2"/>
    <property type="match status" value="1"/>
</dbReference>
<dbReference type="SMART" id="SM01382">
    <property type="entry name" value="Ribosomal_L2_C"/>
    <property type="match status" value="1"/>
</dbReference>
<dbReference type="SUPFAM" id="SSF50249">
    <property type="entry name" value="Nucleic acid-binding proteins"/>
    <property type="match status" value="1"/>
</dbReference>
<dbReference type="SUPFAM" id="SSF50104">
    <property type="entry name" value="Translation proteins SH3-like domain"/>
    <property type="match status" value="1"/>
</dbReference>
<dbReference type="PROSITE" id="PS00467">
    <property type="entry name" value="RIBOSOMAL_L2"/>
    <property type="match status" value="1"/>
</dbReference>